<feature type="chain" id="PRO_0000376862" description="Transcription factor Sox-10">
    <location>
        <begin position="1"/>
        <end position="436"/>
    </location>
</feature>
<feature type="DNA-binding region" description="HMG box" evidence="4">
    <location>
        <begin position="90"/>
        <end position="158"/>
    </location>
</feature>
<feature type="region of interest" description="Disordered" evidence="5">
    <location>
        <begin position="1"/>
        <end position="55"/>
    </location>
</feature>
<feature type="region of interest" description="Dimerization (DIM)" evidence="2">
    <location>
        <begin position="48"/>
        <end position="88"/>
    </location>
</feature>
<feature type="region of interest" description="Disordered" evidence="5">
    <location>
        <begin position="145"/>
        <end position="183"/>
    </location>
</feature>
<feature type="region of interest" description="Disordered" evidence="5">
    <location>
        <begin position="195"/>
        <end position="257"/>
    </location>
</feature>
<feature type="region of interest" description="Transactivation domain (TAM)" evidence="2">
    <location>
        <begin position="209"/>
        <end position="295"/>
    </location>
</feature>
<feature type="region of interest" description="Disordered" evidence="5">
    <location>
        <begin position="322"/>
        <end position="346"/>
    </location>
</feature>
<feature type="region of interest" description="Transactivation domain (TAC)" evidence="2">
    <location>
        <begin position="327"/>
        <end position="436"/>
    </location>
</feature>
<feature type="region of interest" description="Disordered" evidence="5">
    <location>
        <begin position="413"/>
        <end position="436"/>
    </location>
</feature>
<feature type="compositionally biased region" description="Basic and acidic residues" evidence="5">
    <location>
        <begin position="145"/>
        <end position="159"/>
    </location>
</feature>
<feature type="compositionally biased region" description="Polar residues" evidence="5">
    <location>
        <begin position="205"/>
        <end position="215"/>
    </location>
</feature>
<feature type="compositionally biased region" description="Polar residues" evidence="5">
    <location>
        <begin position="331"/>
        <end position="346"/>
    </location>
</feature>
<feature type="cross-link" description="Glycyl lysine isopeptide (Lys-Gly) (interchain with G-Cter in SUMO)" evidence="3">
    <location>
        <position position="44"/>
    </location>
</feature>
<feature type="cross-link" description="Glycyl lysine isopeptide (Lys-Gly) (interchain with G-Cter in SUMO)" evidence="3">
    <location>
        <position position="331"/>
    </location>
</feature>
<proteinExistence type="evidence at transcript level"/>
<reference evidence="6" key="1">
    <citation type="submission" date="2007-03" db="EMBL/GenBank/DDBJ databases">
        <authorList>
            <consortium name="NIH - Xenopus Gene Collection (XGC) project"/>
        </authorList>
    </citation>
    <scope>NUCLEOTIDE SEQUENCE [LARGE SCALE MRNA]</scope>
    <source>
        <tissue evidence="6">Brain</tissue>
    </source>
</reference>
<name>SOX10_XENTR</name>
<keyword id="KW-0963">Cytoplasm</keyword>
<keyword id="KW-0217">Developmental protein</keyword>
<keyword id="KW-0238">DNA-binding</keyword>
<keyword id="KW-1017">Isopeptide bond</keyword>
<keyword id="KW-0539">Nucleus</keyword>
<keyword id="KW-1185">Reference proteome</keyword>
<keyword id="KW-0804">Transcription</keyword>
<keyword id="KW-0805">Transcription regulation</keyword>
<keyword id="KW-0832">Ubl conjugation</keyword>
<keyword id="KW-0879">Wnt signaling pathway</keyword>
<protein>
    <recommendedName>
        <fullName evidence="6">Transcription factor Sox-10</fullName>
    </recommendedName>
    <alternativeName>
        <fullName>SRY (sex determining region Y)-box 10</fullName>
    </alternativeName>
</protein>
<accession>A4IIJ8</accession>
<comment type="function">
    <text evidence="3">Acts early in neural crest formation, functioning redundantly with the other group E Sox factors sox8 and sox9 to induce neural crest progenitors. Acts downstream of wnt-signaling at the neural plate border. Involved in the specification of neural crest progenitors fated to form the pigment cell lineage (By similarity).</text>
</comment>
<comment type="subunit">
    <text evidence="3">Interacts with the sumoylation factors ube2i/ubc9 and sumo1.</text>
</comment>
<comment type="subcellular location">
    <subcellularLocation>
        <location evidence="2">Cytoplasm</location>
    </subcellularLocation>
    <subcellularLocation>
        <location evidence="2">Nucleus</location>
    </subcellularLocation>
</comment>
<comment type="domain">
    <text evidence="1">The transactivation domains TAM and TAC (for transactivation domain in the middle and at the C-terminus, respectively) are required to contact transcriptional coactivators and basal transcriptional machinery components and thereby induce gene transactivation.</text>
</comment>
<comment type="PTM">
    <text evidence="3">Sumoylated.</text>
</comment>
<evidence type="ECO:0000250" key="1">
    <source>
        <dbReference type="UniProtKB" id="P48436"/>
    </source>
</evidence>
<evidence type="ECO:0000250" key="2">
    <source>
        <dbReference type="UniProtKB" id="P56693"/>
    </source>
</evidence>
<evidence type="ECO:0000250" key="3">
    <source>
        <dbReference type="UniProtKB" id="Q8AXX8"/>
    </source>
</evidence>
<evidence type="ECO:0000255" key="4">
    <source>
        <dbReference type="PROSITE-ProRule" id="PRU00267"/>
    </source>
</evidence>
<evidence type="ECO:0000256" key="5">
    <source>
        <dbReference type="SAM" id="MobiDB-lite"/>
    </source>
</evidence>
<evidence type="ECO:0000312" key="6">
    <source>
        <dbReference type="EMBL" id="AAI36048.1"/>
    </source>
</evidence>
<sequence>MSDDQSLSEVEMSPVGSEDPSLTPDPLPPHAHSSPDDDEETKVKKEQDSEDERFPVCIREAVSQVLSGYDWTLVPMPVRVNGGSKSKPHVKRPMNAFMVWAQAARRKLADQYPHLHNAELSKTLGKLWRLLNENDKRPFIEEAERLRMQHKKDHPDYKYQPRRRKNGKPNPGEGDGSSEAEGGAASIQAHYKNSHLDHRHGSPMSDGNSEHSAGQSHGPPTPPTTPKTELQAGKSDGKRDGSRSLGEGGKPHIDFGNVDIGEISHDVMANMETFDVNEFDQYLPPNGHAGHPSHIGGYTSSYGLSGALAAGPSAWALAKQHPQTDSKAQVKTESSSTSHYTEQPSTSQLTYTSLGLPHYGSAFPSISRPQFDYADHQPSSSYYSHSSQASSLYSAFSYMGPPQRPLYTAISDSPSVAQSHSPTHWEQPVYTTLSRP</sequence>
<organism>
    <name type="scientific">Xenopus tropicalis</name>
    <name type="common">Western clawed frog</name>
    <name type="synonym">Silurana tropicalis</name>
    <dbReference type="NCBI Taxonomy" id="8364"/>
    <lineage>
        <taxon>Eukaryota</taxon>
        <taxon>Metazoa</taxon>
        <taxon>Chordata</taxon>
        <taxon>Craniata</taxon>
        <taxon>Vertebrata</taxon>
        <taxon>Euteleostomi</taxon>
        <taxon>Amphibia</taxon>
        <taxon>Batrachia</taxon>
        <taxon>Anura</taxon>
        <taxon>Pipoidea</taxon>
        <taxon>Pipidae</taxon>
        <taxon>Xenopodinae</taxon>
        <taxon>Xenopus</taxon>
        <taxon>Silurana</taxon>
    </lineage>
</organism>
<gene>
    <name evidence="6" type="primary">sox10</name>
</gene>
<dbReference type="EMBL" id="BC136047">
    <property type="protein sequence ID" value="AAI36048.1"/>
    <property type="molecule type" value="mRNA"/>
</dbReference>
<dbReference type="RefSeq" id="NP_001093691.1">
    <property type="nucleotide sequence ID" value="NM_001100221.1"/>
</dbReference>
<dbReference type="RefSeq" id="XP_012815859.1">
    <property type="nucleotide sequence ID" value="XM_012960405.3"/>
</dbReference>
<dbReference type="SMR" id="A4IIJ8"/>
<dbReference type="FunCoup" id="A4IIJ8">
    <property type="interactions" value="423"/>
</dbReference>
<dbReference type="STRING" id="8364.ENSXETP00000041358"/>
<dbReference type="PaxDb" id="8364-ENSXETP00000013902"/>
<dbReference type="DNASU" id="100101700"/>
<dbReference type="GeneID" id="100101700"/>
<dbReference type="KEGG" id="xtr:100101700"/>
<dbReference type="AGR" id="Xenbase:XB-GENE-480304"/>
<dbReference type="CTD" id="6663"/>
<dbReference type="Xenbase" id="XB-GENE-480304">
    <property type="gene designation" value="sox10"/>
</dbReference>
<dbReference type="eggNOG" id="KOG0527">
    <property type="taxonomic scope" value="Eukaryota"/>
</dbReference>
<dbReference type="HOGENOM" id="CLU_031800_0_0_1"/>
<dbReference type="InParanoid" id="A4IIJ8"/>
<dbReference type="OMA" id="ATIQAHY"/>
<dbReference type="OrthoDB" id="6247875at2759"/>
<dbReference type="PhylomeDB" id="A4IIJ8"/>
<dbReference type="Reactome" id="R-XTR-9856649">
    <property type="pathway name" value="Transcriptional and post-translational regulation of MITF-M expression and activity"/>
</dbReference>
<dbReference type="Proteomes" id="UP000008143">
    <property type="component" value="Chromosome 4"/>
</dbReference>
<dbReference type="Bgee" id="ENSXETG00000006348">
    <property type="expression patterns" value="Expressed in neural crest and 16 other cell types or tissues"/>
</dbReference>
<dbReference type="GO" id="GO:0005737">
    <property type="term" value="C:cytoplasm"/>
    <property type="evidence" value="ECO:0007669"/>
    <property type="project" value="UniProtKB-SubCell"/>
</dbReference>
<dbReference type="GO" id="GO:0005634">
    <property type="term" value="C:nucleus"/>
    <property type="evidence" value="ECO:0007669"/>
    <property type="project" value="UniProtKB-SubCell"/>
</dbReference>
<dbReference type="GO" id="GO:0003677">
    <property type="term" value="F:DNA binding"/>
    <property type="evidence" value="ECO:0000250"/>
    <property type="project" value="UniProtKB"/>
</dbReference>
<dbReference type="GO" id="GO:0003700">
    <property type="term" value="F:DNA-binding transcription factor activity"/>
    <property type="evidence" value="ECO:0000250"/>
    <property type="project" value="UniProtKB"/>
</dbReference>
<dbReference type="GO" id="GO:0019899">
    <property type="term" value="F:enzyme binding"/>
    <property type="evidence" value="ECO:0000250"/>
    <property type="project" value="UniProtKB"/>
</dbReference>
<dbReference type="GO" id="GO:0022010">
    <property type="term" value="P:central nervous system myelination"/>
    <property type="evidence" value="ECO:0000250"/>
    <property type="project" value="UniProtKB"/>
</dbReference>
<dbReference type="GO" id="GO:0030318">
    <property type="term" value="P:melanocyte differentiation"/>
    <property type="evidence" value="ECO:0000250"/>
    <property type="project" value="UniProtKB"/>
</dbReference>
<dbReference type="GO" id="GO:0014029">
    <property type="term" value="P:neural crest formation"/>
    <property type="evidence" value="ECO:0000250"/>
    <property type="project" value="UniProtKB"/>
</dbReference>
<dbReference type="GO" id="GO:0014003">
    <property type="term" value="P:oligodendrocyte development"/>
    <property type="evidence" value="ECO:0000250"/>
    <property type="project" value="UniProtKB"/>
</dbReference>
<dbReference type="GO" id="GO:0048709">
    <property type="term" value="P:oligodendrocyte differentiation"/>
    <property type="evidence" value="ECO:0000250"/>
    <property type="project" value="UniProtKB"/>
</dbReference>
<dbReference type="GO" id="GO:0045893">
    <property type="term" value="P:positive regulation of DNA-templated transcription"/>
    <property type="evidence" value="ECO:0000250"/>
    <property type="project" value="UniProtKB"/>
</dbReference>
<dbReference type="GO" id="GO:0016055">
    <property type="term" value="P:Wnt signaling pathway"/>
    <property type="evidence" value="ECO:0007669"/>
    <property type="project" value="UniProtKB-KW"/>
</dbReference>
<dbReference type="CDD" id="cd22031">
    <property type="entry name" value="HMG-box_SoxE"/>
    <property type="match status" value="1"/>
</dbReference>
<dbReference type="FunFam" id="1.10.30.10:FF:000004">
    <property type="entry name" value="Transcription factor SOX-10"/>
    <property type="match status" value="1"/>
</dbReference>
<dbReference type="Gene3D" id="1.10.30.10">
    <property type="entry name" value="High mobility group box domain"/>
    <property type="match status" value="1"/>
</dbReference>
<dbReference type="InterPro" id="IPR009071">
    <property type="entry name" value="HMG_box_dom"/>
</dbReference>
<dbReference type="InterPro" id="IPR036910">
    <property type="entry name" value="HMG_box_dom_sf"/>
</dbReference>
<dbReference type="InterPro" id="IPR022151">
    <property type="entry name" value="Sox_N"/>
</dbReference>
<dbReference type="InterPro" id="IPR050917">
    <property type="entry name" value="SOX_TF"/>
</dbReference>
<dbReference type="PANTHER" id="PTHR45803">
    <property type="entry name" value="SOX100B"/>
    <property type="match status" value="1"/>
</dbReference>
<dbReference type="PANTHER" id="PTHR45803:SF6">
    <property type="entry name" value="TRANSCRIPTION FACTOR SOX-10"/>
    <property type="match status" value="1"/>
</dbReference>
<dbReference type="Pfam" id="PF00505">
    <property type="entry name" value="HMG_box"/>
    <property type="match status" value="1"/>
</dbReference>
<dbReference type="Pfam" id="PF12444">
    <property type="entry name" value="Sox_N"/>
    <property type="match status" value="1"/>
</dbReference>
<dbReference type="SMART" id="SM00398">
    <property type="entry name" value="HMG"/>
    <property type="match status" value="1"/>
</dbReference>
<dbReference type="SUPFAM" id="SSF47095">
    <property type="entry name" value="HMG-box"/>
    <property type="match status" value="1"/>
</dbReference>
<dbReference type="PROSITE" id="PS50118">
    <property type="entry name" value="HMG_BOX_2"/>
    <property type="match status" value="1"/>
</dbReference>